<organism>
    <name type="scientific">Pseudomonas entomophila (strain L48)</name>
    <dbReference type="NCBI Taxonomy" id="384676"/>
    <lineage>
        <taxon>Bacteria</taxon>
        <taxon>Pseudomonadati</taxon>
        <taxon>Pseudomonadota</taxon>
        <taxon>Gammaproteobacteria</taxon>
        <taxon>Pseudomonadales</taxon>
        <taxon>Pseudomonadaceae</taxon>
        <taxon>Pseudomonas</taxon>
    </lineage>
</organism>
<accession>Q1ICS2</accession>
<gene>
    <name evidence="1" type="primary">accD</name>
    <name type="ordered locus">PSEEN1691</name>
</gene>
<feature type="chain" id="PRO_0000359036" description="Acetyl-coenzyme A carboxylase carboxyl transferase subunit beta">
    <location>
        <begin position="1"/>
        <end position="297"/>
    </location>
</feature>
<feature type="domain" description="CoA carboxyltransferase N-terminal" evidence="2">
    <location>
        <begin position="27"/>
        <end position="296"/>
    </location>
</feature>
<feature type="zinc finger region" description="C4-type" evidence="1">
    <location>
        <begin position="31"/>
        <end position="53"/>
    </location>
</feature>
<feature type="binding site" evidence="1">
    <location>
        <position position="31"/>
    </location>
    <ligand>
        <name>Zn(2+)</name>
        <dbReference type="ChEBI" id="CHEBI:29105"/>
    </ligand>
</feature>
<feature type="binding site" evidence="1">
    <location>
        <position position="34"/>
    </location>
    <ligand>
        <name>Zn(2+)</name>
        <dbReference type="ChEBI" id="CHEBI:29105"/>
    </ligand>
</feature>
<feature type="binding site" evidence="1">
    <location>
        <position position="50"/>
    </location>
    <ligand>
        <name>Zn(2+)</name>
        <dbReference type="ChEBI" id="CHEBI:29105"/>
    </ligand>
</feature>
<feature type="binding site" evidence="1">
    <location>
        <position position="53"/>
    </location>
    <ligand>
        <name>Zn(2+)</name>
        <dbReference type="ChEBI" id="CHEBI:29105"/>
    </ligand>
</feature>
<protein>
    <recommendedName>
        <fullName evidence="1">Acetyl-coenzyme A carboxylase carboxyl transferase subunit beta</fullName>
        <shortName evidence="1">ACCase subunit beta</shortName>
        <shortName evidence="1">Acetyl-CoA carboxylase carboxyltransferase subunit beta</shortName>
        <ecNumber evidence="1">2.1.3.15</ecNumber>
    </recommendedName>
</protein>
<sequence length="297" mass="32517">MSNWLVDKLIPSIMRSEVKKSSVPEGLWHKCPSCEAVLYRPELEKTLDVCPKCNHHMRIGARARIDIFLDKDGRAELGADLEPVDRLKFRDGKKYKDRLTAAQKQTGEKDALISMSGNLMGLPVVVSAFEFSFMGGSMGAIVGERFVRAANYALENRCPMICFSASGGARMQEALISLMQMAKTSAVLARLREEGIPFISVLTDPVYGGVSASLAMLGDVIVGEPKALIGFAGPRVIEQTVREKLPEGFQRSEFLLEHGAIDLIISRDELRPRLARLLAQMTGQPTPEAAKEVAAVA</sequence>
<comment type="function">
    <text evidence="1">Component of the acetyl coenzyme A carboxylase (ACC) complex. Biotin carboxylase (BC) catalyzes the carboxylation of biotin on its carrier protein (BCCP) and then the CO(2) group is transferred by the transcarboxylase to acetyl-CoA to form malonyl-CoA.</text>
</comment>
<comment type="catalytic activity">
    <reaction evidence="1">
        <text>N(6)-carboxybiotinyl-L-lysyl-[protein] + acetyl-CoA = N(6)-biotinyl-L-lysyl-[protein] + malonyl-CoA</text>
        <dbReference type="Rhea" id="RHEA:54728"/>
        <dbReference type="Rhea" id="RHEA-COMP:10505"/>
        <dbReference type="Rhea" id="RHEA-COMP:10506"/>
        <dbReference type="ChEBI" id="CHEBI:57288"/>
        <dbReference type="ChEBI" id="CHEBI:57384"/>
        <dbReference type="ChEBI" id="CHEBI:83144"/>
        <dbReference type="ChEBI" id="CHEBI:83145"/>
        <dbReference type="EC" id="2.1.3.15"/>
    </reaction>
</comment>
<comment type="cofactor">
    <cofactor evidence="1">
        <name>Zn(2+)</name>
        <dbReference type="ChEBI" id="CHEBI:29105"/>
    </cofactor>
    <text evidence="1">Binds 1 zinc ion per subunit.</text>
</comment>
<comment type="pathway">
    <text evidence="1">Lipid metabolism; malonyl-CoA biosynthesis; malonyl-CoA from acetyl-CoA: step 1/1.</text>
</comment>
<comment type="subunit">
    <text evidence="1">Acetyl-CoA carboxylase is a heterohexamer composed of biotin carboxyl carrier protein (AccB), biotin carboxylase (AccC) and two subunits each of ACCase subunit alpha (AccA) and ACCase subunit beta (AccD).</text>
</comment>
<comment type="subcellular location">
    <subcellularLocation>
        <location evidence="1">Cytoplasm</location>
    </subcellularLocation>
</comment>
<comment type="similarity">
    <text evidence="1">Belongs to the AccD/PCCB family.</text>
</comment>
<name>ACCD_PSEE4</name>
<proteinExistence type="inferred from homology"/>
<dbReference type="EC" id="2.1.3.15" evidence="1"/>
<dbReference type="EMBL" id="CT573326">
    <property type="protein sequence ID" value="CAK14541.1"/>
    <property type="molecule type" value="Genomic_DNA"/>
</dbReference>
<dbReference type="RefSeq" id="WP_011532951.1">
    <property type="nucleotide sequence ID" value="NC_008027.1"/>
</dbReference>
<dbReference type="SMR" id="Q1ICS2"/>
<dbReference type="STRING" id="384676.PSEEN1691"/>
<dbReference type="GeneID" id="32804933"/>
<dbReference type="KEGG" id="pen:PSEEN1691"/>
<dbReference type="eggNOG" id="COG0777">
    <property type="taxonomic scope" value="Bacteria"/>
</dbReference>
<dbReference type="HOGENOM" id="CLU_015486_1_0_6"/>
<dbReference type="OrthoDB" id="9772975at2"/>
<dbReference type="UniPathway" id="UPA00655">
    <property type="reaction ID" value="UER00711"/>
</dbReference>
<dbReference type="Proteomes" id="UP000000658">
    <property type="component" value="Chromosome"/>
</dbReference>
<dbReference type="GO" id="GO:0009329">
    <property type="term" value="C:acetate CoA-transferase complex"/>
    <property type="evidence" value="ECO:0007669"/>
    <property type="project" value="TreeGrafter"/>
</dbReference>
<dbReference type="GO" id="GO:0003989">
    <property type="term" value="F:acetyl-CoA carboxylase activity"/>
    <property type="evidence" value="ECO:0007669"/>
    <property type="project" value="InterPro"/>
</dbReference>
<dbReference type="GO" id="GO:0005524">
    <property type="term" value="F:ATP binding"/>
    <property type="evidence" value="ECO:0007669"/>
    <property type="project" value="UniProtKB-KW"/>
</dbReference>
<dbReference type="GO" id="GO:0016743">
    <property type="term" value="F:carboxyl- or carbamoyltransferase activity"/>
    <property type="evidence" value="ECO:0007669"/>
    <property type="project" value="UniProtKB-UniRule"/>
</dbReference>
<dbReference type="GO" id="GO:0008270">
    <property type="term" value="F:zinc ion binding"/>
    <property type="evidence" value="ECO:0007669"/>
    <property type="project" value="UniProtKB-UniRule"/>
</dbReference>
<dbReference type="GO" id="GO:0006633">
    <property type="term" value="P:fatty acid biosynthetic process"/>
    <property type="evidence" value="ECO:0007669"/>
    <property type="project" value="UniProtKB-KW"/>
</dbReference>
<dbReference type="GO" id="GO:2001295">
    <property type="term" value="P:malonyl-CoA biosynthetic process"/>
    <property type="evidence" value="ECO:0007669"/>
    <property type="project" value="UniProtKB-UniRule"/>
</dbReference>
<dbReference type="Gene3D" id="3.90.226.10">
    <property type="entry name" value="2-enoyl-CoA Hydratase, Chain A, domain 1"/>
    <property type="match status" value="1"/>
</dbReference>
<dbReference type="HAMAP" id="MF_01395">
    <property type="entry name" value="AcetylCoA_CT_beta"/>
    <property type="match status" value="1"/>
</dbReference>
<dbReference type="InterPro" id="IPR034733">
    <property type="entry name" value="AcCoA_carboxyl_beta"/>
</dbReference>
<dbReference type="InterPro" id="IPR000438">
    <property type="entry name" value="Acetyl_CoA_COase_Trfase_b_su"/>
</dbReference>
<dbReference type="InterPro" id="IPR029045">
    <property type="entry name" value="ClpP/crotonase-like_dom_sf"/>
</dbReference>
<dbReference type="InterPro" id="IPR011762">
    <property type="entry name" value="COA_CT_N"/>
</dbReference>
<dbReference type="InterPro" id="IPR041010">
    <property type="entry name" value="Znf-ACC"/>
</dbReference>
<dbReference type="NCBIfam" id="TIGR00515">
    <property type="entry name" value="accD"/>
    <property type="match status" value="1"/>
</dbReference>
<dbReference type="PANTHER" id="PTHR42995">
    <property type="entry name" value="ACETYL-COENZYME A CARBOXYLASE CARBOXYL TRANSFERASE SUBUNIT BETA, CHLOROPLASTIC"/>
    <property type="match status" value="1"/>
</dbReference>
<dbReference type="PANTHER" id="PTHR42995:SF5">
    <property type="entry name" value="ACETYL-COENZYME A CARBOXYLASE CARBOXYL TRANSFERASE SUBUNIT BETA, CHLOROPLASTIC"/>
    <property type="match status" value="1"/>
</dbReference>
<dbReference type="Pfam" id="PF01039">
    <property type="entry name" value="Carboxyl_trans"/>
    <property type="match status" value="1"/>
</dbReference>
<dbReference type="Pfam" id="PF17848">
    <property type="entry name" value="Zn_ribbon_ACC"/>
    <property type="match status" value="1"/>
</dbReference>
<dbReference type="PRINTS" id="PR01070">
    <property type="entry name" value="ACCCTRFRASEB"/>
</dbReference>
<dbReference type="SUPFAM" id="SSF52096">
    <property type="entry name" value="ClpP/crotonase"/>
    <property type="match status" value="1"/>
</dbReference>
<dbReference type="PROSITE" id="PS50980">
    <property type="entry name" value="COA_CT_NTER"/>
    <property type="match status" value="1"/>
</dbReference>
<reference key="1">
    <citation type="journal article" date="2006" name="Nat. Biotechnol.">
        <title>Complete genome sequence of the entomopathogenic and metabolically versatile soil bacterium Pseudomonas entomophila.</title>
        <authorList>
            <person name="Vodovar N."/>
            <person name="Vallenet D."/>
            <person name="Cruveiller S."/>
            <person name="Rouy Z."/>
            <person name="Barbe V."/>
            <person name="Acosta C."/>
            <person name="Cattolico L."/>
            <person name="Jubin C."/>
            <person name="Lajus A."/>
            <person name="Segurens B."/>
            <person name="Vacherie B."/>
            <person name="Wincker P."/>
            <person name="Weissenbach J."/>
            <person name="Lemaitre B."/>
            <person name="Medigue C."/>
            <person name="Boccard F."/>
        </authorList>
    </citation>
    <scope>NUCLEOTIDE SEQUENCE [LARGE SCALE GENOMIC DNA]</scope>
    <source>
        <strain>L48</strain>
    </source>
</reference>
<evidence type="ECO:0000255" key="1">
    <source>
        <dbReference type="HAMAP-Rule" id="MF_01395"/>
    </source>
</evidence>
<evidence type="ECO:0000255" key="2">
    <source>
        <dbReference type="PROSITE-ProRule" id="PRU01136"/>
    </source>
</evidence>
<keyword id="KW-0067">ATP-binding</keyword>
<keyword id="KW-0963">Cytoplasm</keyword>
<keyword id="KW-0275">Fatty acid biosynthesis</keyword>
<keyword id="KW-0276">Fatty acid metabolism</keyword>
<keyword id="KW-0444">Lipid biosynthesis</keyword>
<keyword id="KW-0443">Lipid metabolism</keyword>
<keyword id="KW-0479">Metal-binding</keyword>
<keyword id="KW-0547">Nucleotide-binding</keyword>
<keyword id="KW-0808">Transferase</keyword>
<keyword id="KW-0862">Zinc</keyword>
<keyword id="KW-0863">Zinc-finger</keyword>